<organism>
    <name type="scientific">Mycolicibacterium smegmatis (strain ATCC 700084 / mc(2)155)</name>
    <name type="common">Mycobacterium smegmatis</name>
    <dbReference type="NCBI Taxonomy" id="246196"/>
    <lineage>
        <taxon>Bacteria</taxon>
        <taxon>Bacillati</taxon>
        <taxon>Actinomycetota</taxon>
        <taxon>Actinomycetes</taxon>
        <taxon>Mycobacteriales</taxon>
        <taxon>Mycobacteriaceae</taxon>
        <taxon>Mycolicibacterium</taxon>
    </lineage>
</organism>
<feature type="chain" id="PRO_0000434989" description="ESX-3 secretion system protein EccA3">
    <location>
        <begin position="1"/>
        <end position="608"/>
    </location>
</feature>
<feature type="region of interest" description="Disordered" evidence="5">
    <location>
        <begin position="284"/>
        <end position="303"/>
    </location>
</feature>
<feature type="compositionally biased region" description="Acidic residues" evidence="5">
    <location>
        <begin position="290"/>
        <end position="301"/>
    </location>
</feature>
<feature type="binding site" evidence="4">
    <location>
        <begin position="365"/>
        <end position="372"/>
    </location>
    <ligand>
        <name>ATP</name>
        <dbReference type="ChEBI" id="CHEBI:30616"/>
    </ligand>
</feature>
<feature type="helix" evidence="12">
    <location>
        <begin position="21"/>
        <end position="30"/>
    </location>
</feature>
<feature type="helix" evidence="12">
    <location>
        <begin position="44"/>
        <end position="57"/>
    </location>
</feature>
<feature type="helix" evidence="12">
    <location>
        <begin position="62"/>
        <end position="70"/>
    </location>
</feature>
<feature type="helix" evidence="12">
    <location>
        <begin position="76"/>
        <end position="84"/>
    </location>
</feature>
<feature type="helix" evidence="12">
    <location>
        <begin position="86"/>
        <end position="88"/>
    </location>
</feature>
<feature type="helix" evidence="12">
    <location>
        <begin position="91"/>
        <end position="96"/>
    </location>
</feature>
<feature type="strand" evidence="12">
    <location>
        <begin position="105"/>
        <end position="108"/>
    </location>
</feature>
<feature type="strand" evidence="12">
    <location>
        <begin position="110"/>
        <end position="112"/>
    </location>
</feature>
<feature type="strand" evidence="12">
    <location>
        <begin position="114"/>
        <end position="117"/>
    </location>
</feature>
<feature type="helix" evidence="12">
    <location>
        <begin position="120"/>
        <end position="133"/>
    </location>
</feature>
<feature type="helix" evidence="12">
    <location>
        <begin position="137"/>
        <end position="150"/>
    </location>
</feature>
<feature type="helix" evidence="12">
    <location>
        <begin position="155"/>
        <end position="167"/>
    </location>
</feature>
<feature type="helix" evidence="12">
    <location>
        <begin position="171"/>
        <end position="182"/>
    </location>
</feature>
<feature type="helix" evidence="12">
    <location>
        <begin position="189"/>
        <end position="205"/>
    </location>
</feature>
<feature type="helix" evidence="12">
    <location>
        <begin position="209"/>
        <end position="216"/>
    </location>
</feature>
<feature type="helix" evidence="12">
    <location>
        <begin position="224"/>
        <end position="240"/>
    </location>
</feature>
<feature type="helix" evidence="12">
    <location>
        <begin position="244"/>
        <end position="257"/>
    </location>
</feature>
<feature type="helix" evidence="12">
    <location>
        <begin position="262"/>
        <end position="269"/>
    </location>
</feature>
<feature type="helix" evidence="12">
    <location>
        <begin position="280"/>
        <end position="284"/>
    </location>
</feature>
<feature type="helix" evidence="12">
    <location>
        <begin position="292"/>
        <end position="294"/>
    </location>
</feature>
<protein>
    <recommendedName>
        <fullName evidence="3">ESX-3 secretion system protein EccA3</fullName>
    </recommendedName>
    <alternativeName>
        <fullName evidence="3">ESX conserved component A3</fullName>
    </alternativeName>
    <alternativeName>
        <fullName evidence="3">Type VII secretion system protein EccA3</fullName>
        <shortName evidence="3">T7SS protein EccA3</shortName>
    </alternativeName>
</protein>
<sequence length="608" mass="66283">MGSDTLAAPPHGAPRVDRDVVSRFATCCRALGLTVNDRQRPADLTAARAGFAGLTHLAHDQCDAWIGLAAAGEVTPAVVDAVWRTVASAGVLQREIGLAAGELGFTYDTGWYLQFRATEPDDFQLAYAARLYEAGEFGEADGLVGEILARRPGWFDARWLQVAINHRAQRWSDVVRLLTPVVTLPSLDDVTSHAVRTALGISLARLGMFAPAMSYLEDPAGPIEVAAVDGALAKALTLRAQGEDDEATEVLQDLFATHPENTQVEQALLDTSFGLVTTTSARIEARSDPWDPETEPSEAEFVDPGAKDRKAHLLLEAEAELAEFIGLEEVKFQVARLKSSVAMAIRRQERGLAVAQRTNHLVFAGPPGTGKTTIARVVAKIYCGLGLLKKETVREVHRADLIGQHIGETEAKTNAIIDSALDGVLFLDEAYALVSTGAKNDFGLVAIDTLLARMENDRDRLVVIVAGYRKDLDAFLDTNEGLRSRFTRSIDFPSYTAPELVEIAVRMAEKRDSVFEKAAHDDMERLFTHLAQATTPDANGVERRSLDIAGNARFVRNLVERSEEEREYRLDHSDQEDFTDEEMMTITAGDVQRSAAPLLRGLGLSVPA</sequence>
<keyword id="KW-0002">3D-structure</keyword>
<keyword id="KW-0067">ATP-binding</keyword>
<keyword id="KW-0963">Cytoplasm</keyword>
<keyword id="KW-0547">Nucleotide-binding</keyword>
<keyword id="KW-1185">Reference proteome</keyword>
<reference key="1">
    <citation type="submission" date="2006-10" db="EMBL/GenBank/DDBJ databases">
        <authorList>
            <person name="Fleischmann R.D."/>
            <person name="Dodson R.J."/>
            <person name="Haft D.H."/>
            <person name="Merkel J.S."/>
            <person name="Nelson W.C."/>
            <person name="Fraser C.M."/>
        </authorList>
    </citation>
    <scope>NUCLEOTIDE SEQUENCE [LARGE SCALE GENOMIC DNA]</scope>
    <source>
        <strain>ATCC 700084 / mc(2)155</strain>
    </source>
</reference>
<reference key="2">
    <citation type="journal article" date="2007" name="Genome Biol.">
        <title>Interrupted coding sequences in Mycobacterium smegmatis: authentic mutations or sequencing errors?</title>
        <authorList>
            <person name="Deshayes C."/>
            <person name="Perrodou E."/>
            <person name="Gallien S."/>
            <person name="Euphrasie D."/>
            <person name="Schaeffer C."/>
            <person name="Van-Dorsselaer A."/>
            <person name="Poch O."/>
            <person name="Lecompte O."/>
            <person name="Reyrat J.-M."/>
        </authorList>
    </citation>
    <scope>NUCLEOTIDE SEQUENCE [LARGE SCALE GENOMIC DNA]</scope>
    <source>
        <strain>ATCC 700084 / mc(2)155</strain>
    </source>
</reference>
<reference key="3">
    <citation type="journal article" date="2009" name="Genome Res.">
        <title>Ortho-proteogenomics: multiple proteomes investigation through orthology and a new MS-based protocol.</title>
        <authorList>
            <person name="Gallien S."/>
            <person name="Perrodou E."/>
            <person name="Carapito C."/>
            <person name="Deshayes C."/>
            <person name="Reyrat J.-M."/>
            <person name="Van Dorsselaer A."/>
            <person name="Poch O."/>
            <person name="Schaeffer C."/>
            <person name="Lecompte O."/>
        </authorList>
    </citation>
    <scope>NUCLEOTIDE SEQUENCE [LARGE SCALE GENOMIC DNA]</scope>
    <source>
        <strain>ATCC 700084 / mc(2)155</strain>
    </source>
</reference>
<reference key="4">
    <citation type="journal article" date="2009" name="Proc. Natl. Acad. Sci. U.S.A.">
        <title>Mycobacterial Esx-3 is required for mycobactin-mediated iron acquisition.</title>
        <authorList>
            <person name="Siegrist M.S."/>
            <person name="Unnikrishnan M."/>
            <person name="McConnell M.J."/>
            <person name="Borowsky M."/>
            <person name="Cheng T.Y."/>
            <person name="Siddiqi N."/>
            <person name="Fortune S.M."/>
            <person name="Moody D.B."/>
            <person name="Rubin E.J."/>
        </authorList>
    </citation>
    <scope>FUNCTION</scope>
</reference>
<reference key="5">
    <citation type="journal article" date="2014" name="MBio">
        <title>Mycobacterial Esx-3 requires multiple components for iron acquisition.</title>
        <authorList>
            <person name="Siegrist M.S."/>
            <person name="Steigedal M."/>
            <person name="Ahmad R."/>
            <person name="Mehra A."/>
            <person name="Dragset M.S."/>
            <person name="Schuster B.M."/>
            <person name="Philips J.A."/>
            <person name="Carr S.A."/>
            <person name="Rubin E.J."/>
        </authorList>
    </citation>
    <scope>FUNCTION</scope>
</reference>
<dbReference type="EMBL" id="CP000480">
    <property type="protein sequence ID" value="ABK69981.1"/>
    <property type="status" value="ALT_INIT"/>
    <property type="molecule type" value="Genomic_DNA"/>
</dbReference>
<dbReference type="EMBL" id="CP001663">
    <property type="protein sequence ID" value="AFP37080.1"/>
    <property type="molecule type" value="Genomic_DNA"/>
</dbReference>
<dbReference type="RefSeq" id="YP_885026.1">
    <property type="nucleotide sequence ID" value="NC_008596.1"/>
</dbReference>
<dbReference type="PDB" id="7NAZ">
    <property type="method" value="X-ray"/>
    <property type="resolution" value="1.60 A"/>
    <property type="chains" value="A=21-300"/>
</dbReference>
<dbReference type="PDBsum" id="7NAZ"/>
<dbReference type="SMR" id="A0QQ38"/>
<dbReference type="STRING" id="246196.MSMEG_0615"/>
<dbReference type="PaxDb" id="246196-MSMEI_0599"/>
<dbReference type="KEGG" id="msg:MSMEI_0599"/>
<dbReference type="KEGG" id="msm:MSMEG_0615"/>
<dbReference type="PATRIC" id="fig|246196.19.peg.611"/>
<dbReference type="eggNOG" id="COG0464">
    <property type="taxonomic scope" value="Bacteria"/>
</dbReference>
<dbReference type="OrthoDB" id="9806903at2"/>
<dbReference type="Proteomes" id="UP000000757">
    <property type="component" value="Chromosome"/>
</dbReference>
<dbReference type="Proteomes" id="UP000006158">
    <property type="component" value="Chromosome"/>
</dbReference>
<dbReference type="GO" id="GO:0005737">
    <property type="term" value="C:cytoplasm"/>
    <property type="evidence" value="ECO:0007669"/>
    <property type="project" value="UniProtKB-SubCell"/>
</dbReference>
<dbReference type="GO" id="GO:0005524">
    <property type="term" value="F:ATP binding"/>
    <property type="evidence" value="ECO:0007669"/>
    <property type="project" value="UniProtKB-KW"/>
</dbReference>
<dbReference type="GO" id="GO:0016887">
    <property type="term" value="F:ATP hydrolysis activity"/>
    <property type="evidence" value="ECO:0007669"/>
    <property type="project" value="InterPro"/>
</dbReference>
<dbReference type="CDD" id="cd00009">
    <property type="entry name" value="AAA"/>
    <property type="match status" value="1"/>
</dbReference>
<dbReference type="FunFam" id="3.40.50.300:FF:000216">
    <property type="entry name" value="Type VII secretion ATPase EccA"/>
    <property type="match status" value="1"/>
</dbReference>
<dbReference type="Gene3D" id="1.10.8.60">
    <property type="match status" value="1"/>
</dbReference>
<dbReference type="Gene3D" id="3.40.50.300">
    <property type="entry name" value="P-loop containing nucleotide triphosphate hydrolases"/>
    <property type="match status" value="1"/>
</dbReference>
<dbReference type="Gene3D" id="1.25.40.10">
    <property type="entry name" value="Tetratricopeptide repeat domain"/>
    <property type="match status" value="1"/>
</dbReference>
<dbReference type="InterPro" id="IPR003593">
    <property type="entry name" value="AAA+_ATPase"/>
</dbReference>
<dbReference type="InterPro" id="IPR041627">
    <property type="entry name" value="AAA_lid_6"/>
</dbReference>
<dbReference type="InterPro" id="IPR003959">
    <property type="entry name" value="ATPase_AAA_core"/>
</dbReference>
<dbReference type="InterPro" id="IPR000641">
    <property type="entry name" value="CbxX/CfxQ"/>
</dbReference>
<dbReference type="InterPro" id="IPR050773">
    <property type="entry name" value="CbxX/CfxQ_RuBisCO_ESX"/>
</dbReference>
<dbReference type="InterPro" id="IPR027417">
    <property type="entry name" value="P-loop_NTPase"/>
</dbReference>
<dbReference type="InterPro" id="IPR023835">
    <property type="entry name" value="T7SS_EccA"/>
</dbReference>
<dbReference type="InterPro" id="IPR049078">
    <property type="entry name" value="T7SS_EccA1-like_N"/>
</dbReference>
<dbReference type="InterPro" id="IPR011990">
    <property type="entry name" value="TPR-like_helical_dom_sf"/>
</dbReference>
<dbReference type="NCBIfam" id="TIGR03922">
    <property type="entry name" value="T7SS_EccA"/>
    <property type="match status" value="1"/>
</dbReference>
<dbReference type="PANTHER" id="PTHR43392">
    <property type="entry name" value="AAA-TYPE ATPASE FAMILY PROTEIN / ANKYRIN REPEAT FAMILY PROTEIN"/>
    <property type="match status" value="1"/>
</dbReference>
<dbReference type="PANTHER" id="PTHR43392:SF2">
    <property type="entry name" value="AAA-TYPE ATPASE FAMILY PROTEIN _ ANKYRIN REPEAT FAMILY PROTEIN"/>
    <property type="match status" value="1"/>
</dbReference>
<dbReference type="Pfam" id="PF00004">
    <property type="entry name" value="AAA"/>
    <property type="match status" value="1"/>
</dbReference>
<dbReference type="Pfam" id="PF17866">
    <property type="entry name" value="AAA_lid_6"/>
    <property type="match status" value="1"/>
</dbReference>
<dbReference type="Pfam" id="PF21545">
    <property type="entry name" value="T7SS_EccA1_N"/>
    <property type="match status" value="1"/>
</dbReference>
<dbReference type="PRINTS" id="PR00819">
    <property type="entry name" value="CBXCFQXSUPER"/>
</dbReference>
<dbReference type="SMART" id="SM00382">
    <property type="entry name" value="AAA"/>
    <property type="match status" value="1"/>
</dbReference>
<dbReference type="SUPFAM" id="SSF52540">
    <property type="entry name" value="P-loop containing nucleoside triphosphate hydrolases"/>
    <property type="match status" value="1"/>
</dbReference>
<dbReference type="SUPFAM" id="SSF48452">
    <property type="entry name" value="TPR-like"/>
    <property type="match status" value="1"/>
</dbReference>
<comment type="function">
    <text evidence="2 6 7">Part of the ESX-3 specialized secretion system, which is required for siderophore-mediated iron acquisition and for the secretion of EsxH and EsxG (PubMed:19846780, PubMed:24803520). EccA3 exhibits ATPase activity and may provide energy for the export of ESX-3 substrates (By similarity).</text>
</comment>
<comment type="subunit">
    <text evidence="2">Part of the ESX-3 / type VII secretion system (T7SS), which is composed of cytosolic and membrane components.</text>
</comment>
<comment type="subcellular location">
    <subcellularLocation>
        <location evidence="1">Cytoplasm</location>
    </subcellularLocation>
</comment>
<comment type="similarity">
    <text evidence="9">Belongs to the CbxX/CfxQ family.</text>
</comment>
<comment type="sequence caution" evidence="9">
    <conflict type="erroneous initiation">
        <sequence resource="EMBL-CDS" id="ABK69981"/>
    </conflict>
    <text>Truncated N-terminus.</text>
</comment>
<name>ECCA3_MYCS2</name>
<evidence type="ECO:0000250" key="1">
    <source>
        <dbReference type="UniProtKB" id="B2HSU9"/>
    </source>
</evidence>
<evidence type="ECO:0000250" key="2">
    <source>
        <dbReference type="UniProtKB" id="P9WPH9"/>
    </source>
</evidence>
<evidence type="ECO:0000250" key="3">
    <source>
        <dbReference type="UniProtKB" id="P9WPI3"/>
    </source>
</evidence>
<evidence type="ECO:0000255" key="4"/>
<evidence type="ECO:0000256" key="5">
    <source>
        <dbReference type="SAM" id="MobiDB-lite"/>
    </source>
</evidence>
<evidence type="ECO:0000269" key="6">
    <source>
    </source>
</evidence>
<evidence type="ECO:0000269" key="7">
    <source>
    </source>
</evidence>
<evidence type="ECO:0000303" key="8">
    <source>
    </source>
</evidence>
<evidence type="ECO:0000305" key="9"/>
<evidence type="ECO:0000312" key="10">
    <source>
        <dbReference type="EMBL" id="ABK69981.1"/>
    </source>
</evidence>
<evidence type="ECO:0000312" key="11">
    <source>
        <dbReference type="EMBL" id="AFP37080.1"/>
    </source>
</evidence>
<evidence type="ECO:0007829" key="12">
    <source>
        <dbReference type="PDB" id="7NAZ"/>
    </source>
</evidence>
<gene>
    <name evidence="8" type="primary">eccA3</name>
    <name evidence="10" type="ordered locus">MSMEG_0615</name>
    <name evidence="11" type="ordered locus">MSMEI_0599</name>
</gene>
<accession>A0QQ38</accession>
<accession>I7F659</accession>
<proteinExistence type="evidence at protein level"/>